<organism>
    <name type="scientific">Chlamydia pneumoniae</name>
    <name type="common">Chlamydophila pneumoniae</name>
    <dbReference type="NCBI Taxonomy" id="83558"/>
    <lineage>
        <taxon>Bacteria</taxon>
        <taxon>Pseudomonadati</taxon>
        <taxon>Chlamydiota</taxon>
        <taxon>Chlamydiia</taxon>
        <taxon>Chlamydiales</taxon>
        <taxon>Chlamydiaceae</taxon>
        <taxon>Chlamydia/Chlamydophila group</taxon>
        <taxon>Chlamydia</taxon>
    </lineage>
</organism>
<gene>
    <name type="primary">glgP</name>
    <name type="ordered locus">CPn_0307</name>
    <name type="ordered locus">CP_0451</name>
    <name type="ordered locus">CpB0316</name>
</gene>
<comment type="function">
    <text evidence="1">Phosphorylase is an important allosteric enzyme in carbohydrate metabolism. Enzymes from different sources differ in their regulatory mechanisms and in their natural substrates. However, all known phosphorylases share catalytic and structural properties (By similarity).</text>
</comment>
<comment type="catalytic activity">
    <reaction>
        <text>[(1-&gt;4)-alpha-D-glucosyl](n) + phosphate = [(1-&gt;4)-alpha-D-glucosyl](n-1) + alpha-D-glucose 1-phosphate</text>
        <dbReference type="Rhea" id="RHEA:41732"/>
        <dbReference type="Rhea" id="RHEA-COMP:9584"/>
        <dbReference type="Rhea" id="RHEA-COMP:9586"/>
        <dbReference type="ChEBI" id="CHEBI:15444"/>
        <dbReference type="ChEBI" id="CHEBI:43474"/>
        <dbReference type="ChEBI" id="CHEBI:58601"/>
        <dbReference type="EC" id="2.4.1.1"/>
    </reaction>
</comment>
<comment type="cofactor">
    <cofactor evidence="1">
        <name>pyridoxal 5'-phosphate</name>
        <dbReference type="ChEBI" id="CHEBI:597326"/>
    </cofactor>
</comment>
<comment type="similarity">
    <text evidence="2">Belongs to the glycogen phosphorylase family.</text>
</comment>
<dbReference type="EC" id="2.4.1.1"/>
<dbReference type="EMBL" id="AE001363">
    <property type="protein sequence ID" value="AAD18456.1"/>
    <property type="molecule type" value="Genomic_DNA"/>
</dbReference>
<dbReference type="EMBL" id="AE002161">
    <property type="protein sequence ID" value="AAF38289.1"/>
    <property type="molecule type" value="Genomic_DNA"/>
</dbReference>
<dbReference type="EMBL" id="BA000008">
    <property type="protein sequence ID" value="BAA98517.1"/>
    <property type="molecule type" value="Genomic_DNA"/>
</dbReference>
<dbReference type="EMBL" id="AE009440">
    <property type="protein sequence ID" value="AAP98249.1"/>
    <property type="molecule type" value="Genomic_DNA"/>
</dbReference>
<dbReference type="PIR" id="C72095">
    <property type="entry name" value="C72095"/>
</dbReference>
<dbReference type="PIR" id="C86529">
    <property type="entry name" value="C86529"/>
</dbReference>
<dbReference type="RefSeq" id="NP_224512.1">
    <property type="nucleotide sequence ID" value="NC_000922.1"/>
</dbReference>
<dbReference type="SMR" id="Q9Z8N1"/>
<dbReference type="STRING" id="406984.CPK_ORF00815"/>
<dbReference type="CAZy" id="GT35">
    <property type="family name" value="Glycosyltransferase Family 35"/>
</dbReference>
<dbReference type="KEGG" id="cpa:CP_0451"/>
<dbReference type="KEGG" id="cpj:glgP"/>
<dbReference type="KEGG" id="cpn:CPn_0307"/>
<dbReference type="KEGG" id="cpt:CpB0316"/>
<dbReference type="PATRIC" id="fig|115713.3.peg.341"/>
<dbReference type="eggNOG" id="COG0058">
    <property type="taxonomic scope" value="Bacteria"/>
</dbReference>
<dbReference type="HOGENOM" id="CLU_010198_1_1_0"/>
<dbReference type="Proteomes" id="UP000000583">
    <property type="component" value="Chromosome"/>
</dbReference>
<dbReference type="Proteomes" id="UP000000801">
    <property type="component" value="Chromosome"/>
</dbReference>
<dbReference type="GO" id="GO:0005737">
    <property type="term" value="C:cytoplasm"/>
    <property type="evidence" value="ECO:0007669"/>
    <property type="project" value="TreeGrafter"/>
</dbReference>
<dbReference type="GO" id="GO:0008184">
    <property type="term" value="F:glycogen phosphorylase activity"/>
    <property type="evidence" value="ECO:0007669"/>
    <property type="project" value="InterPro"/>
</dbReference>
<dbReference type="GO" id="GO:0030170">
    <property type="term" value="F:pyridoxal phosphate binding"/>
    <property type="evidence" value="ECO:0007669"/>
    <property type="project" value="InterPro"/>
</dbReference>
<dbReference type="GO" id="GO:0005980">
    <property type="term" value="P:glycogen catabolic process"/>
    <property type="evidence" value="ECO:0007669"/>
    <property type="project" value="TreeGrafter"/>
</dbReference>
<dbReference type="CDD" id="cd04300">
    <property type="entry name" value="GT35_Glycogen_Phosphorylase"/>
    <property type="match status" value="1"/>
</dbReference>
<dbReference type="FunFam" id="3.40.50.2000:FF:000002">
    <property type="entry name" value="Alpha-1,4 glucan phosphorylase"/>
    <property type="match status" value="1"/>
</dbReference>
<dbReference type="FunFam" id="3.40.50.2000:FF:000005">
    <property type="entry name" value="Alpha-1,4 glucan phosphorylase"/>
    <property type="match status" value="1"/>
</dbReference>
<dbReference type="Gene3D" id="3.40.50.2000">
    <property type="entry name" value="Glycogen Phosphorylase B"/>
    <property type="match status" value="2"/>
</dbReference>
<dbReference type="InterPro" id="IPR011833">
    <property type="entry name" value="Glycg_phsphrylas"/>
</dbReference>
<dbReference type="InterPro" id="IPR000811">
    <property type="entry name" value="Glyco_trans_35"/>
</dbReference>
<dbReference type="InterPro" id="IPR035090">
    <property type="entry name" value="Pyridoxal_P_attach_site"/>
</dbReference>
<dbReference type="NCBIfam" id="TIGR02093">
    <property type="entry name" value="P_ylase"/>
    <property type="match status" value="1"/>
</dbReference>
<dbReference type="PANTHER" id="PTHR11468">
    <property type="entry name" value="GLYCOGEN PHOSPHORYLASE"/>
    <property type="match status" value="1"/>
</dbReference>
<dbReference type="PANTHER" id="PTHR11468:SF3">
    <property type="entry name" value="GLYCOGEN PHOSPHORYLASE, LIVER FORM"/>
    <property type="match status" value="1"/>
</dbReference>
<dbReference type="Pfam" id="PF00343">
    <property type="entry name" value="Phosphorylase"/>
    <property type="match status" value="1"/>
</dbReference>
<dbReference type="PIRSF" id="PIRSF000460">
    <property type="entry name" value="Pprylas_GlgP"/>
    <property type="match status" value="1"/>
</dbReference>
<dbReference type="SUPFAM" id="SSF53756">
    <property type="entry name" value="UDP-Glycosyltransferase/glycogen phosphorylase"/>
    <property type="match status" value="1"/>
</dbReference>
<dbReference type="PROSITE" id="PS00102">
    <property type="entry name" value="PHOSPHORYLASE"/>
    <property type="match status" value="1"/>
</dbReference>
<accession>Q9Z8N1</accession>
<accession>Q9JQ49</accession>
<protein>
    <recommendedName>
        <fullName>Glycogen phosphorylase</fullName>
        <ecNumber>2.4.1.1</ecNumber>
    </recommendedName>
</protein>
<evidence type="ECO:0000250" key="1"/>
<evidence type="ECO:0000305" key="2"/>
<keyword id="KW-0021">Allosteric enzyme</keyword>
<keyword id="KW-0119">Carbohydrate metabolism</keyword>
<keyword id="KW-0321">Glycogen metabolism</keyword>
<keyword id="KW-0328">Glycosyltransferase</keyword>
<keyword id="KW-0663">Pyridoxal phosphate</keyword>
<keyword id="KW-0808">Transferase</keyword>
<feature type="chain" id="PRO_0000188551" description="Glycogen phosphorylase">
    <location>
        <begin position="1"/>
        <end position="824"/>
    </location>
</feature>
<feature type="modified residue" description="N6-(pyridoxal phosphate)lysine" evidence="1">
    <location>
        <position position="667"/>
    </location>
</feature>
<proteinExistence type="inferred from homology"/>
<reference key="1">
    <citation type="journal article" date="1999" name="Nat. Genet.">
        <title>Comparative genomes of Chlamydia pneumoniae and C. trachomatis.</title>
        <authorList>
            <person name="Kalman S."/>
            <person name="Mitchell W.P."/>
            <person name="Marathe R."/>
            <person name="Lammel C.J."/>
            <person name="Fan J."/>
            <person name="Hyman R.W."/>
            <person name="Olinger L."/>
            <person name="Grimwood J."/>
            <person name="Davis R.W."/>
            <person name="Stephens R.S."/>
        </authorList>
    </citation>
    <scope>NUCLEOTIDE SEQUENCE [LARGE SCALE GENOMIC DNA]</scope>
    <source>
        <strain>CWL029</strain>
    </source>
</reference>
<reference key="2">
    <citation type="journal article" date="2000" name="Nucleic Acids Res.">
        <title>Genome sequences of Chlamydia trachomatis MoPn and Chlamydia pneumoniae AR39.</title>
        <authorList>
            <person name="Read T.D."/>
            <person name="Brunham R.C."/>
            <person name="Shen C."/>
            <person name="Gill S.R."/>
            <person name="Heidelberg J.F."/>
            <person name="White O."/>
            <person name="Hickey E.K."/>
            <person name="Peterson J.D."/>
            <person name="Utterback T.R."/>
            <person name="Berry K.J."/>
            <person name="Bass S."/>
            <person name="Linher K.D."/>
            <person name="Weidman J.F."/>
            <person name="Khouri H.M."/>
            <person name="Craven B."/>
            <person name="Bowman C."/>
            <person name="Dodson R.J."/>
            <person name="Gwinn M.L."/>
            <person name="Nelson W.C."/>
            <person name="DeBoy R.T."/>
            <person name="Kolonay J.F."/>
            <person name="McClarty G."/>
            <person name="Salzberg S.L."/>
            <person name="Eisen J.A."/>
            <person name="Fraser C.M."/>
        </authorList>
    </citation>
    <scope>NUCLEOTIDE SEQUENCE [LARGE SCALE GENOMIC DNA]</scope>
    <source>
        <strain>AR39</strain>
    </source>
</reference>
<reference key="3">
    <citation type="journal article" date="2000" name="Nucleic Acids Res.">
        <title>Comparison of whole genome sequences of Chlamydia pneumoniae J138 from Japan and CWL029 from USA.</title>
        <authorList>
            <person name="Shirai M."/>
            <person name="Hirakawa H."/>
            <person name="Kimoto M."/>
            <person name="Tabuchi M."/>
            <person name="Kishi F."/>
            <person name="Ouchi K."/>
            <person name="Shiba T."/>
            <person name="Ishii K."/>
            <person name="Hattori M."/>
            <person name="Kuhara S."/>
            <person name="Nakazawa T."/>
        </authorList>
    </citation>
    <scope>NUCLEOTIDE SEQUENCE [LARGE SCALE GENOMIC DNA]</scope>
    <source>
        <strain>J138</strain>
    </source>
</reference>
<reference key="4">
    <citation type="submission" date="2002-05" db="EMBL/GenBank/DDBJ databases">
        <title>The genome sequence of Chlamydia pneumoniae TW183 and comparison with other Chlamydia strains based on whole genome sequence analysis.</title>
        <authorList>
            <person name="Geng M.M."/>
            <person name="Schuhmacher A."/>
            <person name="Muehldorfer I."/>
            <person name="Bensch K.W."/>
            <person name="Schaefer K.P."/>
            <person name="Schneider S."/>
            <person name="Pohl T."/>
            <person name="Essig A."/>
            <person name="Marre R."/>
            <person name="Melchers K."/>
        </authorList>
    </citation>
    <scope>NUCLEOTIDE SEQUENCE [LARGE SCALE GENOMIC DNA]</scope>
    <source>
        <strain>TW-183</strain>
    </source>
</reference>
<sequence length="824" mass="94517">MEDFSSFDKNKVSVDSMKRAILDRLYLSVVQSPESASPRDIFTAVAKTVMEWLAKGWLKTQNGYYKNDVKRVYYLSMEFLLGRSLKSNLLNLGILDLVRKALKTLNYDFDHLVEMESDAGLGNGGLGRLAACYLDSMATLAVPAYGYGIRYDYGIFDQRIVNGYQEEAPDEWLRYGNPWEICRGEYLYPVRFYGRVIHYTDSRGKQVADLVDTQEVLAMAYDIPIPGYGNDTVNSLRLWQAQSPRGFEFSYFNHGNYIQAIEDIALIENISRVLYPNDSITEGQELRLKQEYFLVSATIQDIIRRYTKTHICLDNLADKVVVQLNDTHPALGIAEMMHILVDREELPWDKAWEMTTVIFNYTNHTILPEALERWPLDLFSKLLPRHLEIIYEINSRWLEKVGSRYPKNDDKRRSLSIVEEGYQKRINMANLAVVGSAKVNGVSSFHSQLIKDTLFKEFYEFFPEKFINVTNGVTPRRWIALCNPRLSKLLNETIGDRYIIDLSHLSLIRSFAEDSGFRDHWKGVKLKNKQDLTSRIYNEVGEIVDPNSLFDCHIKRIHEYKRQLMNILRVIYVYNDLKENPNQDVVPTTVIFSGKAAPGYVMAKLIIKLINSVADVVNQDSRVNDKLKVLFLPNYRVSMAEHIIPGTDLSEQISTAGMEASGTGNMKFALNGALTIGTMDGANIEMAEHIGKENMFIFGLLEEQIVQLRREYCPQTICDKNPKIRQVLDLLEQGFFNSNDKDLFKPIVHRLLHEGDPFFVLADLESYIAAHENVNKLFKEPDSWTKISIYNTAGMGFFSSDRAIQDYARDIWHVPTKSCSGEGN</sequence>
<name>PHSG_CHLPN</name>